<keyword id="KW-0007">Acetylation</keyword>
<keyword id="KW-0009">Actin-binding</keyword>
<keyword id="KW-0965">Cell junction</keyword>
<keyword id="KW-0966">Cell projection</keyword>
<keyword id="KW-0175">Coiled coil</keyword>
<keyword id="KW-0963">Cytoplasm</keyword>
<keyword id="KW-0206">Cytoskeleton</keyword>
<keyword id="KW-0488">Methylation</keyword>
<keyword id="KW-0597">Phosphoprotein</keyword>
<keyword id="KW-0677">Repeat</keyword>
<keyword id="KW-0728">SH3 domain</keyword>
<feature type="chain" id="PRO_0000078134" description="Plectin">
    <location>
        <begin position="1" status="less than"/>
        <end position="4473"/>
    </location>
</feature>
<feature type="domain" description="Calponin-homology (CH) 1" evidence="6">
    <location>
        <begin position="1" status="less than"/>
        <end position="74"/>
    </location>
</feature>
<feature type="domain" description="Calponin-homology (CH) 2" evidence="6">
    <location>
        <begin position="87"/>
        <end position="192"/>
    </location>
</feature>
<feature type="repeat" description="Spectrin 1">
    <location>
        <begin position="449"/>
        <end position="508"/>
    </location>
</feature>
<feature type="repeat" description="Spectrin 2">
    <location>
        <begin position="529"/>
        <end position="613"/>
    </location>
</feature>
<feature type="repeat" description="Spectrin 3">
    <location>
        <begin position="626"/>
        <end position="719"/>
    </location>
</feature>
<feature type="domain" description="SH3" evidence="7">
    <location>
        <begin position="730"/>
        <end position="787"/>
    </location>
</feature>
<feature type="repeat" description="Spectrin 4">
    <location>
        <begin position="1104"/>
        <end position="1204"/>
    </location>
</feature>
<feature type="repeat" description="Plectin 1">
    <location>
        <begin position="2615"/>
        <end position="2652"/>
    </location>
</feature>
<feature type="repeat" description="Plectin 2">
    <location>
        <begin position="2653"/>
        <end position="2690"/>
    </location>
</feature>
<feature type="repeat" description="Plectin 3">
    <location>
        <begin position="2691"/>
        <end position="2728"/>
    </location>
</feature>
<feature type="repeat" description="Plectin 4">
    <location>
        <begin position="2729"/>
        <end position="2766"/>
    </location>
</feature>
<feature type="repeat" description="Plectin 5">
    <location>
        <begin position="2770"/>
        <end position="2804"/>
    </location>
</feature>
<feature type="repeat" description="Plectin 6">
    <location>
        <begin position="2905"/>
        <end position="2942"/>
    </location>
</feature>
<feature type="repeat" description="Plectin 7">
    <location>
        <begin position="2943"/>
        <end position="2980"/>
    </location>
</feature>
<feature type="repeat" description="Plectin 8">
    <location>
        <begin position="2981"/>
        <end position="3018"/>
    </location>
</feature>
<feature type="repeat" description="Plectin 9">
    <location>
        <begin position="3019"/>
        <end position="3056"/>
    </location>
</feature>
<feature type="repeat" description="Plectin 10">
    <location>
        <begin position="3057"/>
        <end position="3094"/>
    </location>
</feature>
<feature type="repeat" description="Plectin 11">
    <location>
        <begin position="3274"/>
        <end position="3311"/>
    </location>
</feature>
<feature type="repeat" description="Plectin 12">
    <location>
        <begin position="3312"/>
        <end position="3349"/>
    </location>
</feature>
<feature type="repeat" description="Plectin 13">
    <location>
        <begin position="3350"/>
        <end position="3387"/>
    </location>
</feature>
<feature type="repeat" description="Plectin 14">
    <location>
        <begin position="3388"/>
        <end position="3425"/>
    </location>
</feature>
<feature type="repeat" description="Plectin 15">
    <location>
        <begin position="3429"/>
        <end position="3463"/>
    </location>
</feature>
<feature type="repeat" description="Plectin 16">
    <location>
        <begin position="3609"/>
        <end position="3646"/>
    </location>
</feature>
<feature type="repeat" description="Plectin 17">
    <location>
        <begin position="3647"/>
        <end position="3684"/>
    </location>
</feature>
<feature type="repeat" description="Plectin 18">
    <location>
        <begin position="3685"/>
        <end position="3722"/>
    </location>
</feature>
<feature type="repeat" description="Plectin 19">
    <location>
        <begin position="3723"/>
        <end position="3760"/>
    </location>
</feature>
<feature type="repeat" description="Plectin 20">
    <location>
        <begin position="3764"/>
        <end position="3797"/>
    </location>
</feature>
<feature type="repeat" description="Plectin 21">
    <location>
        <begin position="3800"/>
        <end position="3834"/>
    </location>
</feature>
<feature type="repeat" description="Plectin 22">
    <location>
        <begin position="3852"/>
        <end position="3889"/>
    </location>
</feature>
<feature type="repeat" description="Plectin 23">
    <location>
        <begin position="3890"/>
        <end position="3927"/>
    </location>
</feature>
<feature type="repeat" description="Plectin 24">
    <location>
        <begin position="3928"/>
        <end position="3965"/>
    </location>
</feature>
<feature type="repeat" description="Plectin 25">
    <location>
        <begin position="3966"/>
        <end position="4003"/>
    </location>
</feature>
<feature type="repeat" description="Plectin 26">
    <location>
        <begin position="4007"/>
        <end position="4041"/>
    </location>
</feature>
<feature type="repeat" description="Plectin 27">
    <location>
        <begin position="4043"/>
        <end position="4094"/>
    </location>
</feature>
<feature type="repeat" description="Plectin 28">
    <location>
        <begin position="4197"/>
        <end position="4234"/>
    </location>
</feature>
<feature type="repeat" description="Plectin 29">
    <location>
        <begin position="4235"/>
        <end position="4272"/>
    </location>
</feature>
<feature type="repeat" description="Plectin 30">
    <location>
        <begin position="4273"/>
        <end position="4310"/>
    </location>
</feature>
<feature type="repeat" description="Plectin 31">
    <location>
        <begin position="4311"/>
        <end position="4348"/>
    </location>
</feature>
<feature type="repeat" description="Plectin 32">
    <location>
        <begin position="4349"/>
        <end position="4386"/>
    </location>
</feature>
<feature type="region of interest" description="Globular 1">
    <location>
        <begin position="1" status="less than"/>
        <end position="1259"/>
    </location>
</feature>
<feature type="region of interest" description="Actin-binding">
    <location>
        <begin position="1" status="less than"/>
        <end position="192"/>
    </location>
</feature>
<feature type="region of interest" description="Central fibrous rod domain">
    <location>
        <begin position="1260"/>
        <end position="2544"/>
    </location>
</feature>
<feature type="region of interest" description="Disordered" evidence="8">
    <location>
        <begin position="1274"/>
        <end position="1293"/>
    </location>
</feature>
<feature type="region of interest" description="Disordered" evidence="8">
    <location>
        <begin position="1407"/>
        <end position="1434"/>
    </location>
</feature>
<feature type="region of interest" description="Disordered" evidence="8">
    <location>
        <begin position="1529"/>
        <end position="1550"/>
    </location>
</feature>
<feature type="region of interest" description="Disordered" evidence="8">
    <location>
        <begin position="1582"/>
        <end position="1616"/>
    </location>
</feature>
<feature type="region of interest" description="Disordered" evidence="8">
    <location>
        <begin position="1881"/>
        <end position="1929"/>
    </location>
</feature>
<feature type="region of interest" description="Disordered" evidence="8">
    <location>
        <begin position="1950"/>
        <end position="1971"/>
    </location>
</feature>
<feature type="region of interest" description="Disordered" evidence="8">
    <location>
        <begin position="2003"/>
        <end position="2098"/>
    </location>
</feature>
<feature type="region of interest" description="Disordered" evidence="8">
    <location>
        <begin position="2457"/>
        <end position="2476"/>
    </location>
</feature>
<feature type="region of interest" description="Globular 2">
    <location>
        <begin position="2545"/>
        <end position="4473"/>
    </location>
</feature>
<feature type="region of interest" description="Binding to intermediate filaments" evidence="1">
    <location>
        <begin position="4039"/>
        <end position="4089"/>
    </location>
</feature>
<feature type="region of interest" description="Disordered" evidence="8">
    <location>
        <begin position="4400"/>
        <end position="4473"/>
    </location>
</feature>
<feature type="region of interest" description="4 X 4 AA tandem repeats of G-S-R-X">
    <location>
        <begin position="4414"/>
        <end position="4429"/>
    </location>
</feature>
<feature type="coiled-coil region" evidence="5">
    <location>
        <begin position="1258"/>
        <end position="2548"/>
    </location>
</feature>
<feature type="compositionally biased region" description="Basic and acidic residues" evidence="8">
    <location>
        <begin position="1587"/>
        <end position="1616"/>
    </location>
</feature>
<feature type="compositionally biased region" description="Basic and acidic residues" evidence="8">
    <location>
        <begin position="1881"/>
        <end position="1897"/>
    </location>
</feature>
<feature type="compositionally biased region" description="Basic and acidic residues" evidence="8">
    <location>
        <begin position="1905"/>
        <end position="1917"/>
    </location>
</feature>
<feature type="compositionally biased region" description="Low complexity" evidence="8">
    <location>
        <begin position="1959"/>
        <end position="1968"/>
    </location>
</feature>
<feature type="compositionally biased region" description="Basic and acidic residues" evidence="8">
    <location>
        <begin position="2003"/>
        <end position="2047"/>
    </location>
</feature>
<feature type="compositionally biased region" description="Low complexity" evidence="8">
    <location>
        <begin position="2048"/>
        <end position="2061"/>
    </location>
</feature>
<feature type="compositionally biased region" description="Basic and acidic residues" evidence="8">
    <location>
        <begin position="2062"/>
        <end position="2077"/>
    </location>
</feature>
<feature type="compositionally biased region" description="Low complexity" evidence="8">
    <location>
        <begin position="4400"/>
        <end position="4460"/>
    </location>
</feature>
<feature type="modified residue" description="Phosphoserine" evidence="3">
    <location>
        <position position="509"/>
    </location>
</feature>
<feature type="modified residue" description="Phosphothreonine" evidence="4">
    <location>
        <position position="604"/>
    </location>
</feature>
<feature type="modified residue" description="Phosphoserine" evidence="3">
    <location>
        <position position="836"/>
    </location>
</feature>
<feature type="modified residue" description="Phosphoserine" evidence="3">
    <location>
        <position position="1224"/>
    </location>
</feature>
<feature type="modified residue" description="Phosphoserine" evidence="3">
    <location>
        <position position="1510"/>
    </location>
</feature>
<feature type="modified residue" description="N6-acetyllysine" evidence="4">
    <location>
        <position position="1514"/>
    </location>
</feature>
<feature type="modified residue" description="Phosphoserine" evidence="3">
    <location>
        <position position="2420"/>
    </location>
</feature>
<feature type="modified residue" description="N6-acetyllysine" evidence="4">
    <location>
        <position position="2425"/>
    </location>
</feature>
<feature type="modified residue" description="Phosphoserine" evidence="2">
    <location>
        <position position="2563"/>
    </location>
</feature>
<feature type="modified residue" description="Phosphoserine" evidence="3">
    <location>
        <position position="2591"/>
    </location>
</feature>
<feature type="modified residue" description="Phosphothreonine" evidence="3">
    <location>
        <position position="2675"/>
    </location>
</feature>
<feature type="modified residue" description="Phosphotyrosine" evidence="4">
    <location>
        <position position="2822"/>
    </location>
</feature>
<feature type="modified residue" description="N6-acetyllysine" evidence="4">
    <location>
        <position position="2842"/>
    </location>
</feature>
<feature type="modified residue" description="N6-acetyllysine" evidence="3">
    <location>
        <position position="2880"/>
    </location>
</feature>
<feature type="modified residue" description="Phosphotyrosine" evidence="4">
    <location>
        <position position="3151"/>
    </location>
</feature>
<feature type="modified residue" description="N6-acetyllysine" evidence="3">
    <location>
        <position position="3209"/>
    </location>
</feature>
<feature type="modified residue" description="Phosphothreonine" evidence="3">
    <location>
        <position position="3574"/>
    </location>
</feature>
<feature type="modified residue" description="Phosphotyrosine" evidence="4">
    <location>
        <position position="3579"/>
    </location>
</feature>
<feature type="modified residue" description="Phosphothreonine" evidence="3">
    <location>
        <position position="3819"/>
    </location>
</feature>
<feature type="modified residue" description="Phosphoserine" evidence="3">
    <location>
        <position position="3843"/>
    </location>
</feature>
<feature type="modified residue" description="Phosphoserine" evidence="3">
    <location>
        <position position="4171"/>
    </location>
</feature>
<feature type="modified residue" description="Phosphoserine" evidence="4">
    <location>
        <position position="4173"/>
    </location>
</feature>
<feature type="modified residue" description="Phosphoserine" evidence="3">
    <location>
        <position position="4174"/>
    </location>
</feature>
<feature type="modified residue" description="Phosphoserine" evidence="3">
    <location>
        <position position="4175"/>
    </location>
</feature>
<feature type="modified residue" description="Phosphoserine" evidence="3">
    <location>
        <position position="4178"/>
    </location>
</feature>
<feature type="modified residue" description="Phosphoserine" evidence="3">
    <location>
        <position position="4179"/>
    </location>
</feature>
<feature type="modified residue" description="Phosphoserine" evidence="3">
    <location>
        <position position="4180"/>
    </location>
</feature>
<feature type="modified residue" description="Phosphoserine" evidence="3">
    <location>
        <position position="4181"/>
    </location>
</feature>
<feature type="modified residue" description="Phosphotyrosine" evidence="3">
    <location>
        <position position="4182"/>
    </location>
</feature>
<feature type="modified residue" description="Phosphoserine" evidence="3">
    <location>
        <position position="4185"/>
    </location>
</feature>
<feature type="modified residue" description="Phosphoserine" evidence="3">
    <location>
        <position position="4189"/>
    </location>
</feature>
<feature type="modified residue" description="Phosphoserine" evidence="2">
    <location>
        <position position="4195"/>
    </location>
</feature>
<feature type="modified residue" description="Phosphothreonine" evidence="3">
    <location>
        <position position="4200"/>
    </location>
</feature>
<feature type="modified residue" description="Phosphothreonine; by CDK1" evidence="9">
    <location>
        <position position="4328"/>
    </location>
</feature>
<feature type="modified residue" description="Phosphoserine" evidence="3">
    <location>
        <position position="4396"/>
    </location>
</feature>
<feature type="modified residue" description="Phosphoserine" evidence="3">
    <location>
        <position position="4402"/>
    </location>
</feature>
<feature type="modified residue" description="Phosphotyrosine" evidence="4">
    <location>
        <position position="4404"/>
    </location>
</feature>
<feature type="modified residue" description="Phosphoserine" evidence="3">
    <location>
        <position position="4405"/>
    </location>
</feature>
<feature type="modified residue" description="Phosphoserine" evidence="3">
    <location>
        <position position="4407"/>
    </location>
</feature>
<feature type="modified residue" description="Phosphoserine" evidence="3">
    <location>
        <position position="4411"/>
    </location>
</feature>
<feature type="modified residue" description="Phosphothreonine" evidence="4">
    <location>
        <position position="4412"/>
    </location>
</feature>
<feature type="modified residue" description="Phosphoserine" evidence="3">
    <location>
        <position position="4415"/>
    </location>
</feature>
<feature type="modified residue" description="Omega-N-methylarginine" evidence="4">
    <location>
        <position position="4416"/>
    </location>
</feature>
<feature type="modified residue" description="Omega-N-methylarginine" evidence="3">
    <location>
        <position position="4429"/>
    </location>
</feature>
<feature type="modified residue" description="Phosphoserine" evidence="3">
    <location>
        <position position="4431"/>
    </location>
</feature>
<feature type="modified residue" description="Phosphoserine" evidence="3">
    <location>
        <position position="4464"/>
    </location>
</feature>
<feature type="non-terminal residue">
    <location>
        <position position="1"/>
    </location>
</feature>
<reference key="1">
    <citation type="journal article" date="2000" name="Biochem. Biophys. Res. Commun.">
        <title>The 300-kDa intermediate filament-associated protein (IFAP300) is a hamster plectin ortholog.</title>
        <authorList>
            <person name="Clubb B.H."/>
            <person name="Chou Y.-H."/>
            <person name="Herrmann H."/>
            <person name="Svitkina T.M."/>
            <person name="Borisy G.G."/>
            <person name="Goldman R.D."/>
        </authorList>
    </citation>
    <scope>NUCLEOTIDE SEQUENCE [MRNA]</scope>
</reference>
<reference key="2">
    <citation type="journal article" date="1996" name="J. Biol. Chem.">
        <title>Identification of plectin as a substrate of p34cdc2 kinase and mapping of a single phosphorylation site.</title>
        <authorList>
            <person name="Malecz N."/>
            <person name="Foisner R."/>
            <person name="Stadler C."/>
            <person name="Wiche G."/>
        </authorList>
    </citation>
    <scope>PHOSPHORYLATION AT THR-4328</scope>
</reference>
<accession>Q9JI55</accession>
<organism>
    <name type="scientific">Cricetulus griseus</name>
    <name type="common">Chinese hamster</name>
    <name type="synonym">Cricetulus barabensis griseus</name>
    <dbReference type="NCBI Taxonomy" id="10029"/>
    <lineage>
        <taxon>Eukaryota</taxon>
        <taxon>Metazoa</taxon>
        <taxon>Chordata</taxon>
        <taxon>Craniata</taxon>
        <taxon>Vertebrata</taxon>
        <taxon>Euteleostomi</taxon>
        <taxon>Mammalia</taxon>
        <taxon>Eutheria</taxon>
        <taxon>Euarchontoglires</taxon>
        <taxon>Glires</taxon>
        <taxon>Rodentia</taxon>
        <taxon>Myomorpha</taxon>
        <taxon>Muroidea</taxon>
        <taxon>Cricetidae</taxon>
        <taxon>Cricetinae</taxon>
        <taxon>Cricetulus</taxon>
    </lineage>
</organism>
<evidence type="ECO:0000250" key="1"/>
<evidence type="ECO:0000250" key="2">
    <source>
        <dbReference type="UniProtKB" id="P30427"/>
    </source>
</evidence>
<evidence type="ECO:0000250" key="3">
    <source>
        <dbReference type="UniProtKB" id="Q15149"/>
    </source>
</evidence>
<evidence type="ECO:0000250" key="4">
    <source>
        <dbReference type="UniProtKB" id="Q9QXS1"/>
    </source>
</evidence>
<evidence type="ECO:0000255" key="5"/>
<evidence type="ECO:0000255" key="6">
    <source>
        <dbReference type="PROSITE-ProRule" id="PRU00044"/>
    </source>
</evidence>
<evidence type="ECO:0000255" key="7">
    <source>
        <dbReference type="PROSITE-ProRule" id="PRU00192"/>
    </source>
</evidence>
<evidence type="ECO:0000256" key="8">
    <source>
        <dbReference type="SAM" id="MobiDB-lite"/>
    </source>
</evidence>
<evidence type="ECO:0000269" key="9">
    <source>
    </source>
</evidence>
<evidence type="ECO:0000305" key="10"/>
<proteinExistence type="evidence at protein level"/>
<gene>
    <name type="primary">PLEC</name>
    <name type="synonym">PLEC1</name>
</gene>
<sequence length="4473" mass="509020">DGHNLISLLEVLSGDSLPREKGRMRFHKLQNVQIALDYLRHRQVKLVNIRNDDIADGNPKLTLGLIWTIILHFQISDIQVSGQSEDMTAKEKLLLWSQRMVEGYQGLRCDNFTTSWRDGRLFNAIIHRHKPMLIDMNKVYRQTNLENLDQAFSVAERDLGVTRLLDPEDVDVPQPDEKSIITYVSSLYDAMPRVPGAQNGVRANELQLRWQEYRELVLLLLQWIRHHTAAFEERKFPSSFEEIEILWCQFLKFKETELPAKEADKSRSKGIYQSLEGAVQAGQLQIPPGFHPLDVEKEWGKLHVAILEREKQLRGEFERLECLQRIVSKLQMEAGLCEEQLNQADSLLQSDIRLLASGKVAQRAGEVERDLDKADGMIRLLFNDVQTLKDGRHPQGEQMYRRVYRLHERLVAIRTEYNLRLKAGVAAPVTQVTVQSTQRRPELEDSTLRYLQDLLAWVEENQRRIDSAEWGVDLPSVEAQLGSHRGMHQSIEEFRAKIERARNDESQLSPATRGAYRECLGRLDLQYAKLLNSSKARLRSLESLHGFVAAATKELMWLNEKEEEEVGFDWSDRNTNMAAKKESYSALMRELEMKEKKIKETQNTGDRLLREDHHARPTVESFQAALQTQWSWMLQLCCCIEAHLKENTAYFQFFSDVREAEEQLQKLQETMRREYSCDRSITVTRLEDLLQDAQDEREQLNEYKGHLSGLAKRAKAIVQLKPRNPAHPVRGHVPLMAVCDYKQVEVTVHKGDQCQLVGPAQPSHWKVLRGPSSEAAVPSVCFLVPPPNQEAQEAVARLEAQHQALVTLWHQLHVDMKSLLAWQNLSRDIQLIRSWSLVTFRTLKPEEQRQALRNLELHYQAFLRDSQDAGGFGPEDRLVAEREYGSCSRHYQQLLQSLEQGEQEESRCQRCISELKDIRLQLEACETRTVHRLRLPLDKEPARECAQRIAEQQKAQAEVEGLGKGVARLSAEAEKVLALPEPSPAAPTLRSELELTLGKLEQVRSLSAIYLEKLKTISLVIRSTQGAEEVLKAHEEQLKEAQAVPATLQELEATKASLKKLRAQAEAQQPVFDTLRDELRGAQEVGERLQQRHGERDVEVERWRERVNQLLERWQAVLAQIDVRQRELEQLGRQLRYYRESADPLSSWLQDAKRRQEQIQAVPIPNSQAAREQLRQEKALLEEIERHGEKVEECQKFAKQYINAIKDYELQLVTYKAQLEPVASPAKKPKVQSGSESVIQEYVDLRTRYSELTTLTSQYIKFISETLRRMEEEERLAEQQRAEERERLAEGEAALEKQRQLAEAHAQAKAQAELEAQELQRRMQEEVARREEAAVNAQQQKRSIQEELQHLRQSSEAEIQAKAQQVEAAERSRMRIEEEIRVVRLQLETTERQRGGAEGELQALRARAEEAEAQKRQAQEEAERLRRQVQDESQRKRQAEAELALRVKAQAEAAQEKQRALQALEELRLQAEEAERRLRQAQAERARQVQVALETAQRSAEVELQSKRASFAEKTAQLERTLQEEHVTVTQLREKAERRAQQQAEAERAREEAERELERWQLKANEALRLRLQAEEVAQQRSLAQADAEKQKEEAEREARRRGKAEEQAVRQRELAEQELEKQRQLAEGTAQQRLAAEQELIRLRAETEQGEQQRQLLEEELARLQREATAATHKRQELEAELAKVRAEMEVLLASKARAEEESRSTSEKSKQRLEAEADRFRELAEEAARLRALAEEAKRQRQLAEEDAARQRAEAERVLTEKLAAISEATRLKTEAEIALKEKEAENERLRRLAEDEAFQRRRLEEQAALHKADIEERLAQLRKASESELERQKGLVEDTLRQRRQVEEEILALKVSFEKAAAGKAELELELGRIRSSAEDTMRSKEQAEQEAARQRQLAAEEEQRRREAEERVQKSLAAEEEAARQRKAALEEVERLKAKVEEARRLRERAEQESARQLQLAQEAAQKRLQAEEKAHAFVVQQREEELQQTLQQEQSMLERLRGEAEAARRAAEEAEEAREQAEREAAQSRKQVEEAERLKQSAEEQAQARAQAQAAAEKLRKEAEQEAARRAQAEQAALKQKQAADAEMEKHKKFAEQTLRQKAQVEQELTTLRLQLEETDHQKSILDEELQRLKAEVTEAARQRSQVEEELFSVRVQMEELGKLKARIEAENRALILRDKDNTQRFLEEEAEKMKQVAEEAARLSVAAQEAARLRQLAEEDLAQQRALAEKMLKEKMQAVQEATRLKAEAELLQQQKELAQEQARRLQEDKEQMAQQLVEETQGFQRTLEVERQRQLEMSAEAERLKLRMAEMSRAQARAEEDAQRFRKQAEEIGEKLHRTELATQEKVTLVQTLEIQRQQSDHDAERLREAIAELEREKEKLKQEAKLLQLKSEEMQTVQQEQILQETQALQKSFLSEKDSLLQRERFIEQEKAKLEQLFQDEVAKAQQLREEQQRQQRQMEQEKQELVASMEEARRRQCEAEEAVRRKQEELQHLELQRQQQEKLLAEENQRLRERLQRLEEEHRAALAHSEEIAATQAAAAKALPNGRDALDGPSMEVEPEHAFEGLRQKVPALQLREAGILSAEELQRLEQGHTTVAELSQREDVRQYLQGRSSIAGLLLKPTDEKLSVYTALQRQLLSPGTALILLEAQAASGFLLDPVRNRRLTVNEPVKEGVVGPELHHKLLSAERAVTGYKDPYTGEQISLFQAMKKDLLVRDHAIRLLEAQIATGGIIDTVHSHRVPVDVAYQRGYFDEEMSRILADPGDDTKGFFDPNTHENLTYLQLLERCVEDPETGLHLLPLTDKAAKGGELVYTDTEARDVFEKATVSAPFGKFQGKTVTIWEIINSEYFTAEQRRDLLRQFRTGRITVEKIIKIVITVVEEQERKGQLCFEGLRALVPAAELLESGVISHELYQQLQRGERSVREVAEADSVRRALRGASVIAGVWLEEAGQKLSIYEALKKDLLQPDVAVALLEAQAGTGHIIDPATSARLTVDEAVRAGLVGPELHEKLLSAEKAVTGYRDPYSGQSVSLFQALKKGLIPREQGLRLLDAQLSTGGMVDPSKSHRVPLDVAYARGYLDKETNRALTSPRNDARVYLDPSSQEPATYSQLQQRCRADQLTGLSLLPVSEKAVRARQEEVYSELQARETLEKARVEVPVGGFKGRTMTVWELISSEYFTQEQRQELLRQFRTGKVTVEKVIRIVITIVEEVETQRQERLSFSGLRAPVPASELLAAKILSRAQFDQLKEGKTSVKDLSEVGSVRTLLQGSGCLAGVYLEDSKEKVTIYEAMRRGLLRPSTATLLLEAQAATGFLVDPVRNQRLYVHEAVKAGVVGPELHEKLLSAEKAVTGYKDPYSGTTISLFQAMKKGLVLREHAIRLLEAQIATGGIIDPVHSHRLPVDVAYQRGYFDEEMSRILADPSDDTKGFFDPNTHENLTYLQLLERCVEDPETGLRLLPLKGAEKTEVVETTQVYTEEETRRAFEETQIDIPGGGSHGGSSMSLWEVMQSDMIPEDQRARLMADFQAGRVTKERMIIIIIEIIEKTEIIRQQNLASYDYVRRRLTAEDLYEARIISLETYNLFREGTKSLREVLEMESAWRYLYGTGSVAGVYLPGSRQTLTIYQALKKGLLSAEVARLLLEAQAATGFLLDPVKGERLTVDEAVRKGLVGPELHDRLLSAERAVTGYRDPYTEQTISLFQAMKKELIPAEEALRLLDAQLATGGIVDPRLGFHLPLEVAYQRGYLNKDTHDQLSEPSEVRSYVDPSTDERLSYTQLLKRCRRDDGSGQMLLPLSDARRLTFRGLRKQITVEELVRSQVMDEATALQLQEGLTSIEEVTKTLQKFLEGTSCIAGVFVDATKERLSVYQAMKKGIIRPGTAFELLEAQAATGYVIDPIKGLKLTVEEAVRMGIVGPEFKDRLLSAERAVTGYKDPYSGKLISLFQAMKKGLILKDHGIRLLEAQIATGGIIDPEESHRLPVEVAYKRGLFDEEMNEILTDPSDDTKGFFDPNTEENLTYLQLMERCITDPQTGLRLLPLKEKKRERKTSSKSSVRKRRVVIVDPETSKEMSVYEAYRKGLIDHQTYLELSEQECEWEEITISSSDGVVKSMIIDRRSGRQYDIDDAITENLIDRSALDQYRAGTLSITEFADMLSGNAGGFRSRSSSVGSSSSYPISPAVSRTQLASWSDPTEETGPVAGILDTETLEKVSITEAMHRNLVDNITGQRLLEAQACTGGIIDPSTGERFPVTEAVNKGLVDKIMVDRINLAQKAFCGFEDPRTKTKMSAAQALKKGWLYYEAGQRFLEVQYLTGGLIEPDTPGRVPLDEALQRGTVDARTAQKLRDVSAYSKYLTCPKTKLKISYKDALDRSMVEEGTGLRLLEAAAQSSKGYYSPYSVSGSGSTTGSRTGSRTGSRAGSRRGSFDATGSGFSMTFSSSSYSSSGYGRRYASGPPASLGGPESAVA</sequence>
<dbReference type="EMBL" id="AF260753">
    <property type="protein sequence ID" value="AAF70372.1"/>
    <property type="molecule type" value="mRNA"/>
</dbReference>
<dbReference type="SMR" id="Q9JI55"/>
<dbReference type="iPTMnet" id="Q9JI55"/>
<dbReference type="Proteomes" id="UP000694386">
    <property type="component" value="Unplaced"/>
</dbReference>
<dbReference type="Proteomes" id="UP001108280">
    <property type="component" value="Unplaced"/>
</dbReference>
<dbReference type="GO" id="GO:0042995">
    <property type="term" value="C:cell projection"/>
    <property type="evidence" value="ECO:0007669"/>
    <property type="project" value="UniProtKB-KW"/>
</dbReference>
<dbReference type="GO" id="GO:0005737">
    <property type="term" value="C:cytoplasm"/>
    <property type="evidence" value="ECO:0007669"/>
    <property type="project" value="UniProtKB-KW"/>
</dbReference>
<dbReference type="GO" id="GO:0030056">
    <property type="term" value="C:hemidesmosome"/>
    <property type="evidence" value="ECO:0007669"/>
    <property type="project" value="UniProtKB-SubCell"/>
</dbReference>
<dbReference type="GO" id="GO:0045095">
    <property type="term" value="C:keratin filament"/>
    <property type="evidence" value="ECO:0007669"/>
    <property type="project" value="TreeGrafter"/>
</dbReference>
<dbReference type="GO" id="GO:0016020">
    <property type="term" value="C:membrane"/>
    <property type="evidence" value="ECO:0007669"/>
    <property type="project" value="TreeGrafter"/>
</dbReference>
<dbReference type="GO" id="GO:0030496">
    <property type="term" value="C:midbody"/>
    <property type="evidence" value="ECO:0000314"/>
    <property type="project" value="UniProtKB"/>
</dbReference>
<dbReference type="GO" id="GO:0002102">
    <property type="term" value="C:podosome"/>
    <property type="evidence" value="ECO:0000250"/>
    <property type="project" value="UniProtKB"/>
</dbReference>
<dbReference type="GO" id="GO:0003779">
    <property type="term" value="F:actin binding"/>
    <property type="evidence" value="ECO:0007669"/>
    <property type="project" value="UniProtKB-KW"/>
</dbReference>
<dbReference type="GO" id="GO:1990254">
    <property type="term" value="F:keratin filament binding"/>
    <property type="evidence" value="ECO:0007669"/>
    <property type="project" value="TreeGrafter"/>
</dbReference>
<dbReference type="GO" id="GO:0005198">
    <property type="term" value="F:structural molecule activity"/>
    <property type="evidence" value="ECO:0007669"/>
    <property type="project" value="TreeGrafter"/>
</dbReference>
<dbReference type="GO" id="GO:0045110">
    <property type="term" value="P:intermediate filament bundle assembly"/>
    <property type="evidence" value="ECO:0007669"/>
    <property type="project" value="TreeGrafter"/>
</dbReference>
<dbReference type="GO" id="GO:0042060">
    <property type="term" value="P:wound healing"/>
    <property type="evidence" value="ECO:0007669"/>
    <property type="project" value="TreeGrafter"/>
</dbReference>
<dbReference type="CDD" id="cd21188">
    <property type="entry name" value="CH_PLEC-like_rpt1"/>
    <property type="match status" value="1"/>
</dbReference>
<dbReference type="CDD" id="cd21238">
    <property type="entry name" value="CH_PLEC_rpt2"/>
    <property type="match status" value="1"/>
</dbReference>
<dbReference type="CDD" id="cd00176">
    <property type="entry name" value="SPEC"/>
    <property type="match status" value="2"/>
</dbReference>
<dbReference type="FunFam" id="1.20.58.60:FF:000009">
    <property type="entry name" value="dystonin isoform X1"/>
    <property type="match status" value="1"/>
</dbReference>
<dbReference type="FunFam" id="1.10.418.10:FF:000002">
    <property type="entry name" value="Microtubule-actin cross-linking factor 1"/>
    <property type="match status" value="1"/>
</dbReference>
<dbReference type="FunFam" id="1.20.58.60:FF:000036">
    <property type="entry name" value="Plectin a"/>
    <property type="match status" value="1"/>
</dbReference>
<dbReference type="FunFam" id="1.20.58.60:FF:000076">
    <property type="entry name" value="Plectin a"/>
    <property type="match status" value="1"/>
</dbReference>
<dbReference type="FunFam" id="2.30.30.40:FF:000064">
    <property type="entry name" value="Plectin a"/>
    <property type="match status" value="1"/>
</dbReference>
<dbReference type="FunFam" id="3.30.160.780:FF:000001">
    <property type="entry name" value="Plectin a"/>
    <property type="match status" value="1"/>
</dbReference>
<dbReference type="FunFam" id="3.90.1290.10:FF:000001">
    <property type="entry name" value="Plectin a"/>
    <property type="match status" value="5"/>
</dbReference>
<dbReference type="FunFam" id="3.90.1290.10:FF:000002">
    <property type="entry name" value="Plectin a"/>
    <property type="match status" value="1"/>
</dbReference>
<dbReference type="FunFam" id="1.20.58.60:FF:000065">
    <property type="entry name" value="plectin isoform X1"/>
    <property type="match status" value="1"/>
</dbReference>
<dbReference type="FunFam" id="1.20.58.60:FF:000010">
    <property type="entry name" value="plectin isoform X2"/>
    <property type="match status" value="1"/>
</dbReference>
<dbReference type="FunFam" id="1.10.418.10:FF:000089">
    <property type="entry name" value="Spectrin beta chain"/>
    <property type="match status" value="1"/>
</dbReference>
<dbReference type="Gene3D" id="1.20.58.1060">
    <property type="match status" value="1"/>
</dbReference>
<dbReference type="Gene3D" id="1.20.58.60">
    <property type="match status" value="5"/>
</dbReference>
<dbReference type="Gene3D" id="3.30.160.780">
    <property type="match status" value="1"/>
</dbReference>
<dbReference type="Gene3D" id="1.10.418.10">
    <property type="entry name" value="Calponin-like domain"/>
    <property type="match status" value="2"/>
</dbReference>
<dbReference type="Gene3D" id="3.90.1290.10">
    <property type="entry name" value="Plakin repeat"/>
    <property type="match status" value="6"/>
</dbReference>
<dbReference type="Gene3D" id="2.30.30.40">
    <property type="entry name" value="SH3 Domains"/>
    <property type="match status" value="1"/>
</dbReference>
<dbReference type="InterPro" id="IPR001589">
    <property type="entry name" value="Actinin_actin-bd_CS"/>
</dbReference>
<dbReference type="InterPro" id="IPR001715">
    <property type="entry name" value="CH_dom"/>
</dbReference>
<dbReference type="InterPro" id="IPR036872">
    <property type="entry name" value="CH_dom_sf"/>
</dbReference>
<dbReference type="InterPro" id="IPR041615">
    <property type="entry name" value="Desmoplakin_SH3"/>
</dbReference>
<dbReference type="InterPro" id="IPR041573">
    <property type="entry name" value="Desmoplakin_Spectrin-like"/>
</dbReference>
<dbReference type="InterPro" id="IPR049538">
    <property type="entry name" value="PCN-like_spectrin-like_rpt"/>
</dbReference>
<dbReference type="InterPro" id="IPR043197">
    <property type="entry name" value="Plakin"/>
</dbReference>
<dbReference type="InterPro" id="IPR035915">
    <property type="entry name" value="Plakin_repeat_sf"/>
</dbReference>
<dbReference type="InterPro" id="IPR001101">
    <property type="entry name" value="Plectin_repeat"/>
</dbReference>
<dbReference type="InterPro" id="IPR001452">
    <property type="entry name" value="SH3_domain"/>
</dbReference>
<dbReference type="InterPro" id="IPR018159">
    <property type="entry name" value="Spectrin/alpha-actinin"/>
</dbReference>
<dbReference type="PANTHER" id="PTHR23169">
    <property type="entry name" value="ENVOPLAKIN"/>
    <property type="match status" value="1"/>
</dbReference>
<dbReference type="PANTHER" id="PTHR23169:SF21">
    <property type="entry name" value="EPIPLAKIN"/>
    <property type="match status" value="1"/>
</dbReference>
<dbReference type="Pfam" id="PF00307">
    <property type="entry name" value="CH"/>
    <property type="match status" value="2"/>
</dbReference>
<dbReference type="Pfam" id="PF00681">
    <property type="entry name" value="Plectin"/>
    <property type="match status" value="19"/>
</dbReference>
<dbReference type="Pfam" id="PF17902">
    <property type="entry name" value="SH3_10"/>
    <property type="match status" value="1"/>
</dbReference>
<dbReference type="Pfam" id="PF18373">
    <property type="entry name" value="Spectrin_2"/>
    <property type="match status" value="1"/>
</dbReference>
<dbReference type="Pfam" id="PF21019">
    <property type="entry name" value="Spectrin_3"/>
    <property type="match status" value="1"/>
</dbReference>
<dbReference type="Pfam" id="PF21020">
    <property type="entry name" value="Spectrin_4"/>
    <property type="match status" value="1"/>
</dbReference>
<dbReference type="Pfam" id="PF21097">
    <property type="entry name" value="SR_plectin_7"/>
    <property type="match status" value="1"/>
</dbReference>
<dbReference type="SMART" id="SM00033">
    <property type="entry name" value="CH"/>
    <property type="match status" value="2"/>
</dbReference>
<dbReference type="SMART" id="SM00250">
    <property type="entry name" value="PLEC"/>
    <property type="match status" value="34"/>
</dbReference>
<dbReference type="SMART" id="SM00150">
    <property type="entry name" value="SPEC"/>
    <property type="match status" value="6"/>
</dbReference>
<dbReference type="SUPFAM" id="SSF47576">
    <property type="entry name" value="Calponin-homology domain, CH-domain"/>
    <property type="match status" value="1"/>
</dbReference>
<dbReference type="SUPFAM" id="SSF75399">
    <property type="entry name" value="Plakin repeat"/>
    <property type="match status" value="7"/>
</dbReference>
<dbReference type="SUPFAM" id="SSF46966">
    <property type="entry name" value="Spectrin repeat"/>
    <property type="match status" value="5"/>
</dbReference>
<dbReference type="PROSITE" id="PS00020">
    <property type="entry name" value="ACTININ_2"/>
    <property type="match status" value="1"/>
</dbReference>
<dbReference type="PROSITE" id="PS50021">
    <property type="entry name" value="CH"/>
    <property type="match status" value="2"/>
</dbReference>
<dbReference type="PROSITE" id="PS50002">
    <property type="entry name" value="SH3"/>
    <property type="match status" value="1"/>
</dbReference>
<comment type="function">
    <text>Interlinks intermediate filaments with microtubules and microfilaments and anchors intermediate filaments to desmosomes or hemidesmosomes. May be involved not only in the cross-linking and stabilization of cytoskeletal intermediate filaments network, but also in the regulation of their dynamics.</text>
</comment>
<comment type="subunit">
    <text evidence="1 2 4">Homodimer or homotetramer (By similarity). Interacts (via actin-binding domain) with SYNE3. Interacts (via calponin-homology (CH) 1 domain) with VIM (via rod region). Interacts (via N-terminus) with DST isoform 2 (via N-terminus). Interacts with FER. Interacts with TOR1A (By similarity). Interacts with ANK3 (By similarity). Identified in complexes that contain VIM, EZR, AHNAK, BFSP1, BFSP2, ANK2, PLEC, PRX and spectrin (By similarity).</text>
</comment>
<comment type="subcellular location">
    <subcellularLocation>
        <location evidence="3">Cytoplasm</location>
        <location evidence="3">Cytoskeleton</location>
    </subcellularLocation>
    <subcellularLocation>
        <location evidence="3">Cell junction</location>
        <location evidence="3">Hemidesmosome</location>
    </subcellularLocation>
    <subcellularLocation>
        <location evidence="4">Cell projection</location>
        <location evidence="4">Podosome</location>
    </subcellularLocation>
    <text evidence="4">Localized to the cortex of myotube podosomes.</text>
</comment>
<comment type="domain">
    <text>The N-terminus interacts with actin, the C-terminus with vimentin, desmin, GFAP, cytokeratins, lamin B; whereas both the N- and the C-terminus can bind integrin beta-4.</text>
</comment>
<comment type="PTM">
    <text evidence="9">Phosphorylated by CDK1; regulates dissociation from intermediate filaments during mitosis.</text>
</comment>
<comment type="similarity">
    <text evidence="10">Belongs to the plakin or cytolinker family.</text>
</comment>
<name>PLEC_CRIGR</name>
<protein>
    <recommendedName>
        <fullName>Plectin</fullName>
        <shortName>PCN</shortName>
        <shortName>PLTN</shortName>
    </recommendedName>
    <alternativeName>
        <fullName>300 kDa intermediate filament-associated protein</fullName>
    </alternativeName>
    <alternativeName>
        <fullName>IFAP300</fullName>
    </alternativeName>
    <alternativeName>
        <fullName>Plectin-1</fullName>
    </alternativeName>
</protein>